<sequence length="284" mass="31656">MDKLLQWSIAQQSGDKEAIQKLGQPDPKMLEQLFGGPDEPTLMKQAIAVIQNPEATLEDKEIAFDNFEMLIENLDNANNIENMKLWPAIVNQLEDGVPATLRVYAASVIGTAVQNNPKAQEDFNKTSGPEKLIKIASDEKTPKDLLLKTLYALSSAMRNFKPAYANFVENNGWNIISLSKENDHKIQLRQLSAVSSILSTGLDEDKQENIQNAKLVEYLVSILTKDGHIGCIEKALNIISELAHYKYQFTSTEIARLAQGLEQIETLSDRLTEEDLVSAKKIVS</sequence>
<feature type="chain" id="PRO_0000285400" description="Hsp70 nucleotide exchange factor FES1">
    <location>
        <begin position="1"/>
        <end position="284"/>
    </location>
</feature>
<feature type="repeat" description="ARM 1">
    <location>
        <begin position="13"/>
        <end position="55"/>
    </location>
</feature>
<feature type="repeat" description="ARM 2">
    <location>
        <begin position="74"/>
        <end position="114"/>
    </location>
</feature>
<feature type="repeat" description="ARM 3">
    <location>
        <begin position="117"/>
        <end position="158"/>
    </location>
</feature>
<feature type="repeat" description="ARM 4">
    <location>
        <begin position="161"/>
        <end position="199"/>
    </location>
</feature>
<feature type="repeat" description="ARM 5">
    <location>
        <begin position="204"/>
        <end position="244"/>
    </location>
</feature>
<gene>
    <name type="primary">FES1</name>
    <name type="ORF">PICST_46950</name>
</gene>
<evidence type="ECO:0000250" key="1"/>
<evidence type="ECO:0000305" key="2"/>
<keyword id="KW-0963">Cytoplasm</keyword>
<keyword id="KW-1185">Reference proteome</keyword>
<keyword id="KW-0677">Repeat</keyword>
<keyword id="KW-0810">Translation regulation</keyword>
<comment type="function">
    <text evidence="1">Functions as a nucleotide exchange factor (NEF) for Hsp70 chaperones which accelerates the release of ADP. Required for fully efficient Hsp70-mediated folding of proteins (By similarity).</text>
</comment>
<comment type="subcellular location">
    <subcellularLocation>
        <location evidence="1">Cytoplasm</location>
    </subcellularLocation>
</comment>
<comment type="similarity">
    <text evidence="2">Belongs to the FES1 family.</text>
</comment>
<dbReference type="EMBL" id="CP000499">
    <property type="protein sequence ID" value="ABN67034.1"/>
    <property type="molecule type" value="Genomic_DNA"/>
</dbReference>
<dbReference type="RefSeq" id="XP_001385063.1">
    <property type="nucleotide sequence ID" value="XM_001385026.1"/>
</dbReference>
<dbReference type="SMR" id="A3LUY1"/>
<dbReference type="FunCoup" id="A3LUY1">
    <property type="interactions" value="207"/>
</dbReference>
<dbReference type="STRING" id="322104.A3LUY1"/>
<dbReference type="GeneID" id="4839602"/>
<dbReference type="KEGG" id="pic:PICST_46950"/>
<dbReference type="eggNOG" id="KOG2160">
    <property type="taxonomic scope" value="Eukaryota"/>
</dbReference>
<dbReference type="HOGENOM" id="CLU_046722_1_0_1"/>
<dbReference type="InParanoid" id="A3LUY1"/>
<dbReference type="OMA" id="LHWSIAN"/>
<dbReference type="OrthoDB" id="10250458at2759"/>
<dbReference type="Proteomes" id="UP000002258">
    <property type="component" value="Chromosome 5"/>
</dbReference>
<dbReference type="GO" id="GO:0005829">
    <property type="term" value="C:cytosol"/>
    <property type="evidence" value="ECO:0007669"/>
    <property type="project" value="EnsemblFungi"/>
</dbReference>
<dbReference type="GO" id="GO:0005783">
    <property type="term" value="C:endoplasmic reticulum"/>
    <property type="evidence" value="ECO:0007669"/>
    <property type="project" value="TreeGrafter"/>
</dbReference>
<dbReference type="GO" id="GO:0000774">
    <property type="term" value="F:adenyl-nucleotide exchange factor activity"/>
    <property type="evidence" value="ECO:0007669"/>
    <property type="project" value="EnsemblFungi"/>
</dbReference>
<dbReference type="GO" id="GO:0071629">
    <property type="term" value="P:cytoplasm protein quality control by the ubiquitin-proteasome system"/>
    <property type="evidence" value="ECO:0007669"/>
    <property type="project" value="EnsemblFungi"/>
</dbReference>
<dbReference type="GO" id="GO:0006417">
    <property type="term" value="P:regulation of translation"/>
    <property type="evidence" value="ECO:0007669"/>
    <property type="project" value="UniProtKB-KW"/>
</dbReference>
<dbReference type="Gene3D" id="1.25.10.10">
    <property type="entry name" value="Leucine-rich Repeat Variant"/>
    <property type="match status" value="1"/>
</dbReference>
<dbReference type="InterPro" id="IPR011989">
    <property type="entry name" value="ARM-like"/>
</dbReference>
<dbReference type="InterPro" id="IPR016024">
    <property type="entry name" value="ARM-type_fold"/>
</dbReference>
<dbReference type="InterPro" id="IPR050693">
    <property type="entry name" value="Hsp70_NEF-Inhibitors"/>
</dbReference>
<dbReference type="InterPro" id="IPR013918">
    <property type="entry name" value="Nucleotide_exch_fac_Fes1"/>
</dbReference>
<dbReference type="PANTHER" id="PTHR19316:SF18">
    <property type="entry name" value="HSP70-BINDING PROTEIN 1"/>
    <property type="match status" value="1"/>
</dbReference>
<dbReference type="PANTHER" id="PTHR19316">
    <property type="entry name" value="PROTEIN FOLDING REGULATOR"/>
    <property type="match status" value="1"/>
</dbReference>
<dbReference type="Pfam" id="PF08609">
    <property type="entry name" value="Fes1"/>
    <property type="match status" value="1"/>
</dbReference>
<dbReference type="SUPFAM" id="SSF48371">
    <property type="entry name" value="ARM repeat"/>
    <property type="match status" value="1"/>
</dbReference>
<organism>
    <name type="scientific">Scheffersomyces stipitis (strain ATCC 58785 / CBS 6054 / NBRC 10063 / NRRL Y-11545)</name>
    <name type="common">Yeast</name>
    <name type="synonym">Pichia stipitis</name>
    <dbReference type="NCBI Taxonomy" id="322104"/>
    <lineage>
        <taxon>Eukaryota</taxon>
        <taxon>Fungi</taxon>
        <taxon>Dikarya</taxon>
        <taxon>Ascomycota</taxon>
        <taxon>Saccharomycotina</taxon>
        <taxon>Pichiomycetes</taxon>
        <taxon>Debaryomycetaceae</taxon>
        <taxon>Scheffersomyces</taxon>
    </lineage>
</organism>
<name>FES1_PICST</name>
<reference key="1">
    <citation type="journal article" date="2007" name="Nat. Biotechnol.">
        <title>Genome sequence of the lignocellulose-bioconverting and xylose-fermenting yeast Pichia stipitis.</title>
        <authorList>
            <person name="Jeffries T.W."/>
            <person name="Grigoriev I.V."/>
            <person name="Grimwood J."/>
            <person name="Laplaza J.M."/>
            <person name="Aerts A."/>
            <person name="Salamov A."/>
            <person name="Schmutz J."/>
            <person name="Lindquist E."/>
            <person name="Dehal P."/>
            <person name="Shapiro H."/>
            <person name="Jin Y.-S."/>
            <person name="Passoth V."/>
            <person name="Richardson P.M."/>
        </authorList>
    </citation>
    <scope>NUCLEOTIDE SEQUENCE [LARGE SCALE GENOMIC DNA]</scope>
    <source>
        <strain>ATCC 58785 / CBS 6054 / NBRC 10063 / NRRL Y-11545</strain>
    </source>
</reference>
<accession>A3LUY1</accession>
<protein>
    <recommendedName>
        <fullName>Hsp70 nucleotide exchange factor FES1</fullName>
    </recommendedName>
</protein>
<proteinExistence type="inferred from homology"/>